<feature type="chain" id="PRO_1000054148" description="Cyclic pyranopterin monophosphate synthase">
    <location>
        <begin position="1"/>
        <end position="160"/>
    </location>
</feature>
<feature type="active site" evidence="1">
    <location>
        <position position="128"/>
    </location>
</feature>
<feature type="binding site" evidence="1">
    <location>
        <begin position="75"/>
        <end position="77"/>
    </location>
    <ligand>
        <name>substrate</name>
    </ligand>
</feature>
<feature type="binding site" evidence="1">
    <location>
        <begin position="113"/>
        <end position="114"/>
    </location>
    <ligand>
        <name>substrate</name>
    </ligand>
</feature>
<accession>Q2NUJ1</accession>
<evidence type="ECO:0000255" key="1">
    <source>
        <dbReference type="HAMAP-Rule" id="MF_01224"/>
    </source>
</evidence>
<reference key="1">
    <citation type="journal article" date="2006" name="Genome Res.">
        <title>Massive genome erosion and functional adaptations provide insights into the symbiotic lifestyle of Sodalis glossinidius in the tsetse host.</title>
        <authorList>
            <person name="Toh H."/>
            <person name="Weiss B.L."/>
            <person name="Perkin S.A.H."/>
            <person name="Yamashita A."/>
            <person name="Oshima K."/>
            <person name="Hattori M."/>
            <person name="Aksoy S."/>
        </authorList>
    </citation>
    <scope>NUCLEOTIDE SEQUENCE [LARGE SCALE GENOMIC DNA]</scope>
    <source>
        <strain>morsitans</strain>
    </source>
</reference>
<keyword id="KW-0456">Lyase</keyword>
<keyword id="KW-0501">Molybdenum cofactor biosynthesis</keyword>
<dbReference type="EC" id="4.6.1.17" evidence="1"/>
<dbReference type="EMBL" id="AP008232">
    <property type="protein sequence ID" value="BAE74184.1"/>
    <property type="molecule type" value="Genomic_DNA"/>
</dbReference>
<dbReference type="RefSeq" id="WP_011410770.1">
    <property type="nucleotide sequence ID" value="NC_007712.1"/>
</dbReference>
<dbReference type="SMR" id="Q2NUJ1"/>
<dbReference type="STRING" id="343509.SG0909"/>
<dbReference type="KEGG" id="sgl:SG0909"/>
<dbReference type="eggNOG" id="COG0315">
    <property type="taxonomic scope" value="Bacteria"/>
</dbReference>
<dbReference type="HOGENOM" id="CLU_074693_1_1_6"/>
<dbReference type="OrthoDB" id="9794429at2"/>
<dbReference type="BioCyc" id="SGLO343509:SGP1_RS07725-MONOMER"/>
<dbReference type="UniPathway" id="UPA00344"/>
<dbReference type="Proteomes" id="UP000001932">
    <property type="component" value="Chromosome"/>
</dbReference>
<dbReference type="GO" id="GO:0061799">
    <property type="term" value="F:cyclic pyranopterin monophosphate synthase activity"/>
    <property type="evidence" value="ECO:0007669"/>
    <property type="project" value="UniProtKB-UniRule"/>
</dbReference>
<dbReference type="GO" id="GO:0006777">
    <property type="term" value="P:Mo-molybdopterin cofactor biosynthetic process"/>
    <property type="evidence" value="ECO:0007669"/>
    <property type="project" value="UniProtKB-UniRule"/>
</dbReference>
<dbReference type="CDD" id="cd01420">
    <property type="entry name" value="MoaC_PE"/>
    <property type="match status" value="1"/>
</dbReference>
<dbReference type="FunFam" id="3.30.70.640:FF:000001">
    <property type="entry name" value="Cyclic pyranopterin monophosphate synthase"/>
    <property type="match status" value="1"/>
</dbReference>
<dbReference type="Gene3D" id="3.30.70.640">
    <property type="entry name" value="Molybdopterin cofactor biosynthesis C (MoaC) domain"/>
    <property type="match status" value="1"/>
</dbReference>
<dbReference type="HAMAP" id="MF_01224_B">
    <property type="entry name" value="MoaC_B"/>
    <property type="match status" value="1"/>
</dbReference>
<dbReference type="InterPro" id="IPR023045">
    <property type="entry name" value="MoaC"/>
</dbReference>
<dbReference type="InterPro" id="IPR047594">
    <property type="entry name" value="MoaC_bact/euk"/>
</dbReference>
<dbReference type="InterPro" id="IPR036522">
    <property type="entry name" value="MoaC_sf"/>
</dbReference>
<dbReference type="InterPro" id="IPR050105">
    <property type="entry name" value="MoCo_biosynth_MoaA/MoaC"/>
</dbReference>
<dbReference type="InterPro" id="IPR002820">
    <property type="entry name" value="Mopterin_CF_biosynth-C_dom"/>
</dbReference>
<dbReference type="NCBIfam" id="TIGR00581">
    <property type="entry name" value="moaC"/>
    <property type="match status" value="1"/>
</dbReference>
<dbReference type="NCBIfam" id="NF006870">
    <property type="entry name" value="PRK09364.1"/>
    <property type="match status" value="1"/>
</dbReference>
<dbReference type="PANTHER" id="PTHR22960">
    <property type="entry name" value="MOLYBDOPTERIN COFACTOR SYNTHESIS PROTEIN A"/>
    <property type="match status" value="1"/>
</dbReference>
<dbReference type="Pfam" id="PF01967">
    <property type="entry name" value="MoaC"/>
    <property type="match status" value="1"/>
</dbReference>
<dbReference type="SUPFAM" id="SSF55040">
    <property type="entry name" value="Molybdenum cofactor biosynthesis protein C, MoaC"/>
    <property type="match status" value="1"/>
</dbReference>
<gene>
    <name evidence="1" type="primary">moaC</name>
    <name type="ordered locus">SG0909</name>
</gene>
<organism>
    <name type="scientific">Sodalis glossinidius (strain morsitans)</name>
    <dbReference type="NCBI Taxonomy" id="343509"/>
    <lineage>
        <taxon>Bacteria</taxon>
        <taxon>Pseudomonadati</taxon>
        <taxon>Pseudomonadota</taxon>
        <taxon>Gammaproteobacteria</taxon>
        <taxon>Enterobacterales</taxon>
        <taxon>Bruguierivoracaceae</taxon>
        <taxon>Sodalis</taxon>
    </lineage>
</organism>
<protein>
    <recommendedName>
        <fullName evidence="1">Cyclic pyranopterin monophosphate synthase</fullName>
        <ecNumber evidence="1">4.6.1.17</ecNumber>
    </recommendedName>
    <alternativeName>
        <fullName evidence="1">Molybdenum cofactor biosynthesis protein C</fullName>
    </alternativeName>
</protein>
<name>MOAC_SODGM</name>
<sequence length="160" mass="17310">MSQLTHITERGEAHMVDASAKADTVREARASAYVTMARATLAMILDGQHHKGDVFATARIAGIQAAKRTWELIPLCHPLMLSKVEVQLTAETEQHWVRIDAVCRLTGKTGVEMEALTAASVAALTIYDMCKAVQKDMFIGPVRLLAKSGGKSGDFTGDEV</sequence>
<proteinExistence type="inferred from homology"/>
<comment type="function">
    <text evidence="1">Catalyzes the conversion of (8S)-3',8-cyclo-7,8-dihydroguanosine 5'-triphosphate to cyclic pyranopterin monophosphate (cPMP).</text>
</comment>
<comment type="catalytic activity">
    <reaction evidence="1">
        <text>(8S)-3',8-cyclo-7,8-dihydroguanosine 5'-triphosphate = cyclic pyranopterin phosphate + diphosphate</text>
        <dbReference type="Rhea" id="RHEA:49580"/>
        <dbReference type="ChEBI" id="CHEBI:33019"/>
        <dbReference type="ChEBI" id="CHEBI:59648"/>
        <dbReference type="ChEBI" id="CHEBI:131766"/>
        <dbReference type="EC" id="4.6.1.17"/>
    </reaction>
</comment>
<comment type="pathway">
    <text evidence="1">Cofactor biosynthesis; molybdopterin biosynthesis.</text>
</comment>
<comment type="subunit">
    <text evidence="1">Homohexamer; trimer of dimers.</text>
</comment>
<comment type="similarity">
    <text evidence="1">Belongs to the MoaC family.</text>
</comment>